<protein>
    <recommendedName>
        <fullName>NADPH-dependent oxidoreductase</fullName>
        <ecNumber>1.6.-.-</ecNumber>
    </recommendedName>
</protein>
<keyword id="KW-0285">Flavoprotein</keyword>
<keyword id="KW-0288">FMN</keyword>
<keyword id="KW-0521">NADP</keyword>
<keyword id="KW-0560">Oxidoreductase</keyword>
<dbReference type="EC" id="1.6.-.-"/>
<dbReference type="EMBL" id="AE015929">
    <property type="protein sequence ID" value="AAO05998.1"/>
    <property type="status" value="ALT_INIT"/>
    <property type="molecule type" value="Genomic_DNA"/>
</dbReference>
<dbReference type="RefSeq" id="NP_765910.1">
    <property type="nucleotide sequence ID" value="NC_004461.1"/>
</dbReference>
<dbReference type="RefSeq" id="WP_002485228.1">
    <property type="nucleotide sequence ID" value="NZ_WBME01000004.1"/>
</dbReference>
<dbReference type="SMR" id="Q8CMQ4"/>
<dbReference type="KEGG" id="sep:SE_2355"/>
<dbReference type="PATRIC" id="fig|176280.10.peg.2298"/>
<dbReference type="eggNOG" id="COG0778">
    <property type="taxonomic scope" value="Bacteria"/>
</dbReference>
<dbReference type="HOGENOM" id="CLU_070764_0_0_9"/>
<dbReference type="OrthoDB" id="9775805at2"/>
<dbReference type="Proteomes" id="UP000001411">
    <property type="component" value="Chromosome"/>
</dbReference>
<dbReference type="GO" id="GO:0016491">
    <property type="term" value="F:oxidoreductase activity"/>
    <property type="evidence" value="ECO:0007669"/>
    <property type="project" value="UniProtKB-KW"/>
</dbReference>
<dbReference type="CDD" id="cd02146">
    <property type="entry name" value="NfsA-like"/>
    <property type="match status" value="1"/>
</dbReference>
<dbReference type="Gene3D" id="3.40.109.10">
    <property type="entry name" value="NADH Oxidase"/>
    <property type="match status" value="1"/>
</dbReference>
<dbReference type="InterPro" id="IPR016446">
    <property type="entry name" value="Flavin_OxRdtase_Frp"/>
</dbReference>
<dbReference type="InterPro" id="IPR029479">
    <property type="entry name" value="Nitroreductase"/>
</dbReference>
<dbReference type="InterPro" id="IPR000415">
    <property type="entry name" value="Nitroreductase-like"/>
</dbReference>
<dbReference type="PANTHER" id="PTHR43425:SF3">
    <property type="entry name" value="NADPH-DEPENDENT OXIDOREDUCTASE"/>
    <property type="match status" value="1"/>
</dbReference>
<dbReference type="PANTHER" id="PTHR43425">
    <property type="entry name" value="OXYGEN-INSENSITIVE NADPH NITROREDUCTASE"/>
    <property type="match status" value="1"/>
</dbReference>
<dbReference type="Pfam" id="PF00881">
    <property type="entry name" value="Nitroreductase"/>
    <property type="match status" value="1"/>
</dbReference>
<dbReference type="PIRSF" id="PIRSF005426">
    <property type="entry name" value="Frp"/>
    <property type="match status" value="1"/>
</dbReference>
<dbReference type="SUPFAM" id="SSF55469">
    <property type="entry name" value="FMN-dependent nitroreductase-like"/>
    <property type="match status" value="1"/>
</dbReference>
<evidence type="ECO:0000250" key="1"/>
<evidence type="ECO:0000305" key="2"/>
<feature type="chain" id="PRO_0000239728" description="NADPH-dependent oxidoreductase">
    <location>
        <begin position="1"/>
        <end position="251"/>
    </location>
</feature>
<accession>Q8CMQ4</accession>
<proteinExistence type="inferred from homology"/>
<name>NFRA_STAES</name>
<organism>
    <name type="scientific">Staphylococcus epidermidis (strain ATCC 12228 / FDA PCI 1200)</name>
    <dbReference type="NCBI Taxonomy" id="176280"/>
    <lineage>
        <taxon>Bacteria</taxon>
        <taxon>Bacillati</taxon>
        <taxon>Bacillota</taxon>
        <taxon>Bacilli</taxon>
        <taxon>Bacillales</taxon>
        <taxon>Staphylococcaceae</taxon>
        <taxon>Staphylococcus</taxon>
    </lineage>
</organism>
<comment type="function">
    <text evidence="1">Reduces FMN, organic nitro compounds and disulfide DTNB. Involved in maintenance of the cellular redox state and the disulfide stress response (By similarity).</text>
</comment>
<comment type="cofactor">
    <cofactor evidence="1">
        <name>FMN</name>
        <dbReference type="ChEBI" id="CHEBI:58210"/>
    </cofactor>
</comment>
<comment type="similarity">
    <text evidence="2">Belongs to the flavin oxidoreductase frp family.</text>
</comment>
<comment type="sequence caution" evidence="2">
    <conflict type="erroneous initiation">
        <sequence resource="EMBL-CDS" id="AAO05998"/>
    </conflict>
</comment>
<reference key="1">
    <citation type="journal article" date="2003" name="Mol. Microbiol.">
        <title>Genome-based analysis of virulence genes in a non-biofilm-forming Staphylococcus epidermidis strain (ATCC 12228).</title>
        <authorList>
            <person name="Zhang Y.-Q."/>
            <person name="Ren S.-X."/>
            <person name="Li H.-L."/>
            <person name="Wang Y.-X."/>
            <person name="Fu G."/>
            <person name="Yang J."/>
            <person name="Qin Z.-Q."/>
            <person name="Miao Y.-G."/>
            <person name="Wang W.-Y."/>
            <person name="Chen R.-S."/>
            <person name="Shen Y."/>
            <person name="Chen Z."/>
            <person name="Yuan Z.-H."/>
            <person name="Zhao G.-P."/>
            <person name="Qu D."/>
            <person name="Danchin A."/>
            <person name="Wen Y.-M."/>
        </authorList>
    </citation>
    <scope>NUCLEOTIDE SEQUENCE [LARGE SCALE GENOMIC DNA]</scope>
    <source>
        <strain>ATCC 12228 / FDA PCI 1200</strain>
    </source>
</reference>
<sequence length="251" mass="28577">MSDYVYELMKQHHSVRKFKNQPLGSETVEKLVEAGQSASTSSYLQTYSIIGVEDPSIKARLKEVSGQPYVLDNGYLFVFVLDYYRHHLVDEVAASNMETSYGSAEGLLVGTIDVALVAQNMAVAAEDMGYGIVYLGSLRNDVARVREILNLPDYTFPLFGMAVGEPSDEENGSPKPRLPFKHIFHKDQYDANQHQQRKELEAYDQVVSEYYKERTNGVRTENWSQQIETFLGRKTRLDMLDELKKAGFIKR</sequence>
<gene>
    <name type="primary">nfrA</name>
    <name type="ordered locus">SE_2355</name>
</gene>